<name>HSF_YEAST</name>
<evidence type="ECO:0000250" key="1">
    <source>
        <dbReference type="UniProtKB" id="P22121"/>
    </source>
</evidence>
<evidence type="ECO:0000256" key="2">
    <source>
        <dbReference type="SAM" id="MobiDB-lite"/>
    </source>
</evidence>
<evidence type="ECO:0000269" key="3">
    <source>
    </source>
</evidence>
<evidence type="ECO:0000269" key="4">
    <source>
    </source>
</evidence>
<evidence type="ECO:0000269" key="5">
    <source>
    </source>
</evidence>
<evidence type="ECO:0000303" key="6">
    <source>
    </source>
</evidence>
<evidence type="ECO:0000305" key="7"/>
<evidence type="ECO:0000305" key="8">
    <source>
    </source>
</evidence>
<evidence type="ECO:0007744" key="9">
    <source>
    </source>
</evidence>
<evidence type="ECO:0007744" key="10">
    <source>
    </source>
</evidence>
<evidence type="ECO:0007744" key="11">
    <source>
    </source>
</evidence>
<sequence>MNNAANTGTTNESNVSDAPRIEPLPSLNDDDIEKILQPNDIFTTDRTDASTTSSTAIEDIINPSLDPQSAASPVPSSSFFHDSRKPSTSTHLVRRGTPLGIYQTNLYGHNSRENTNPNSTLLSSKLLAHPPVPYGQNPDLLQHAVYRAQPSSGTTNAQPRQTTRRYQSHKSRPAFVNKLWSMLNDDSNTKLIQWAEDGKSFIVTNREEFVHQILPKYFKHSNFASFVRQLNMYGWHKVQDVKSGSIQSSSDDKWQFENENFIRGREDLLEKIIRQKGSSNNHNSPSGNGNPANGSNIPLDNAAGSNNSNNNISSSNSFFNNGHLLQGKTLRLMNEANLGDKNDVTAILGELEQIKYNQIAISKDLLRINKDNELLWQENMMARERHRTQQQALEKMFRFLTSIVPHLDPKMIMDGLGDPKVNNEKLNSANNIGLNRDNTGTIDELKSNDSFINDDRNSFTNATTNARNNMSPNNDDNSIDTASTNTTNRKKNIDENIKNNNDIINDIIFNTNLANNLSNYNSNNNAGSPIRPYKQRYLLKNRANSSTSSENPSLTPFDIESNNDRKISEIPFDDEEEEETDFRPFTSRDPNNQTSENTFDPNRFTMLSDDDLKKDSHTNDNKHNESDLFWDNVHRNIDEQDARLQNLENMVHILSPGYPNKSFNNKTSSTNTNSNMESAVNVNSPGFNLQDYLTGESNSPNSVHSVPSNGSGSTPLPMPNDNDTEHASTSVNQGENGSGLTPFLTVDDHTLNDNNTSEGSTRVSPDIKFSATENTKVSDNLPSFNDHSYSTQADTAPENAKKRFVEEIPEPAIVEIQDPTEYNDHRLPKRAKK</sequence>
<organism>
    <name type="scientific">Saccharomyces cerevisiae (strain ATCC 204508 / S288c)</name>
    <name type="common">Baker's yeast</name>
    <dbReference type="NCBI Taxonomy" id="559292"/>
    <lineage>
        <taxon>Eukaryota</taxon>
        <taxon>Fungi</taxon>
        <taxon>Dikarya</taxon>
        <taxon>Ascomycota</taxon>
        <taxon>Saccharomycotina</taxon>
        <taxon>Saccharomycetes</taxon>
        <taxon>Saccharomycetales</taxon>
        <taxon>Saccharomycetaceae</taxon>
        <taxon>Saccharomyces</taxon>
    </lineage>
</organism>
<protein>
    <recommendedName>
        <fullName evidence="6">Heat shock transcription factor</fullName>
        <shortName evidence="7">HSTF</shortName>
    </recommendedName>
    <alternativeName>
        <fullName evidence="7">Heat shock factor protein</fullName>
        <shortName evidence="6">HSF</shortName>
    </alternativeName>
</protein>
<accession>P10961</accession>
<accession>D6VU70</accession>
<accession>P11529</accession>
<keyword id="KW-0007">Acetylation</keyword>
<keyword id="KW-0010">Activator</keyword>
<keyword id="KW-0903">Direct protein sequencing</keyword>
<keyword id="KW-0238">DNA-binding</keyword>
<keyword id="KW-0539">Nucleus</keyword>
<keyword id="KW-0597">Phosphoprotein</keyword>
<keyword id="KW-1185">Reference proteome</keyword>
<keyword id="KW-0346">Stress response</keyword>
<keyword id="KW-0804">Transcription</keyword>
<keyword id="KW-0805">Transcription regulation</keyword>
<gene>
    <name evidence="6" type="primary">HSF1</name>
    <name type="ordered locus">YGL073W</name>
</gene>
<reference key="1">
    <citation type="journal article" date="1988" name="Cell">
        <title>Yeast heat shock factor is an essential DNA-binding protein that exhibits temperature-dependent phosphorylation.</title>
        <authorList>
            <person name="Sorger P.K."/>
            <person name="Pelham H.R.B."/>
        </authorList>
    </citation>
    <scope>NUCLEOTIDE SEQUENCE [GENOMIC DNA]</scope>
    <scope>PARTIAL PROTEIN SEQUENCE</scope>
    <scope>FUNCTION</scope>
    <scope>SUBCELLULAR LOCATION</scope>
    <scope>PHOSPHORYLATION</scope>
    <scope>DISRUPTION PHENOTYPE</scope>
</reference>
<reference key="2">
    <citation type="journal article" date="1988" name="Cell">
        <title>Isolation of the gene encoding the S. cerevisiae heat shock transcription factor.</title>
        <authorList>
            <person name="Wiederrecht G."/>
            <person name="Seto D."/>
            <person name="Parker C.S."/>
        </authorList>
    </citation>
    <scope>NUCLEOTIDE SEQUENCE [GENOMIC DNA]</scope>
    <scope>FUNCTION</scope>
    <scope>DISRUPTION PHENOTYPE</scope>
</reference>
<reference key="3">
    <citation type="journal article" date="1997" name="Yeast">
        <title>Sequence analysis of 203 kilobases from Saccharomyces cerevisiae chromosome VII.</title>
        <authorList>
            <person name="Rieger M."/>
            <person name="Brueckner M."/>
            <person name="Schaefer M."/>
            <person name="Mueller-Auer S."/>
        </authorList>
    </citation>
    <scope>NUCLEOTIDE SEQUENCE [GENOMIC DNA]</scope>
    <source>
        <strain>ATCC 204508 / S288c</strain>
    </source>
</reference>
<reference key="4">
    <citation type="journal article" date="1997" name="Nature">
        <title>The nucleotide sequence of Saccharomyces cerevisiae chromosome VII.</title>
        <authorList>
            <person name="Tettelin H."/>
            <person name="Agostoni-Carbone M.L."/>
            <person name="Albermann K."/>
            <person name="Albers M."/>
            <person name="Arroyo J."/>
            <person name="Backes U."/>
            <person name="Barreiros T."/>
            <person name="Bertani I."/>
            <person name="Bjourson A.J."/>
            <person name="Brueckner M."/>
            <person name="Bruschi C.V."/>
            <person name="Carignani G."/>
            <person name="Castagnoli L."/>
            <person name="Cerdan E."/>
            <person name="Clemente M.L."/>
            <person name="Coblenz A."/>
            <person name="Coglievina M."/>
            <person name="Coissac E."/>
            <person name="Defoor E."/>
            <person name="Del Bino S."/>
            <person name="Delius H."/>
            <person name="Delneri D."/>
            <person name="de Wergifosse P."/>
            <person name="Dujon B."/>
            <person name="Durand P."/>
            <person name="Entian K.-D."/>
            <person name="Eraso P."/>
            <person name="Escribano V."/>
            <person name="Fabiani L."/>
            <person name="Fartmann B."/>
            <person name="Feroli F."/>
            <person name="Feuermann M."/>
            <person name="Frontali L."/>
            <person name="Garcia-Gonzalez M."/>
            <person name="Garcia-Saez M.I."/>
            <person name="Goffeau A."/>
            <person name="Guerreiro P."/>
            <person name="Hani J."/>
            <person name="Hansen M."/>
            <person name="Hebling U."/>
            <person name="Hernandez K."/>
            <person name="Heumann K."/>
            <person name="Hilger F."/>
            <person name="Hofmann B."/>
            <person name="Indge K.J."/>
            <person name="James C.M."/>
            <person name="Klima R."/>
            <person name="Koetter P."/>
            <person name="Kramer B."/>
            <person name="Kramer W."/>
            <person name="Lauquin G."/>
            <person name="Leuther H."/>
            <person name="Louis E.J."/>
            <person name="Maillier E."/>
            <person name="Marconi A."/>
            <person name="Martegani E."/>
            <person name="Mazon M.J."/>
            <person name="Mazzoni C."/>
            <person name="McReynolds A.D.K."/>
            <person name="Melchioretto P."/>
            <person name="Mewes H.-W."/>
            <person name="Minenkova O."/>
            <person name="Mueller-Auer S."/>
            <person name="Nawrocki A."/>
            <person name="Netter P."/>
            <person name="Neu R."/>
            <person name="Nombela C."/>
            <person name="Oliver S.G."/>
            <person name="Panzeri L."/>
            <person name="Paoluzi S."/>
            <person name="Plevani P."/>
            <person name="Portetelle D."/>
            <person name="Portillo F."/>
            <person name="Potier S."/>
            <person name="Purnelle B."/>
            <person name="Rieger M."/>
            <person name="Riles L."/>
            <person name="Rinaldi T."/>
            <person name="Robben J."/>
            <person name="Rodrigues-Pousada C."/>
            <person name="Rodriguez-Belmonte E."/>
            <person name="Rodriguez-Torres A.M."/>
            <person name="Rose M."/>
            <person name="Ruzzi M."/>
            <person name="Saliola M."/>
            <person name="Sanchez-Perez M."/>
            <person name="Schaefer B."/>
            <person name="Schaefer M."/>
            <person name="Scharfe M."/>
            <person name="Schmidheini T."/>
            <person name="Schreer A."/>
            <person name="Skala J."/>
            <person name="Souciet J.-L."/>
            <person name="Steensma H.Y."/>
            <person name="Talla E."/>
            <person name="Thierry A."/>
            <person name="Vandenbol M."/>
            <person name="van der Aart Q.J.M."/>
            <person name="Van Dyck L."/>
            <person name="Vanoni M."/>
            <person name="Verhasselt P."/>
            <person name="Voet M."/>
            <person name="Volckaert G."/>
            <person name="Wambutt R."/>
            <person name="Watson M.D."/>
            <person name="Weber N."/>
            <person name="Wedler E."/>
            <person name="Wedler H."/>
            <person name="Wipfli P."/>
            <person name="Wolf K."/>
            <person name="Wright L.F."/>
            <person name="Zaccaria P."/>
            <person name="Zimmermann M."/>
            <person name="Zollner A."/>
            <person name="Kleine K."/>
        </authorList>
    </citation>
    <scope>NUCLEOTIDE SEQUENCE [LARGE SCALE GENOMIC DNA]</scope>
    <source>
        <strain>ATCC 204508 / S288c</strain>
    </source>
</reference>
<reference key="5">
    <citation type="journal article" date="2014" name="G3 (Bethesda)">
        <title>The reference genome sequence of Saccharomyces cerevisiae: Then and now.</title>
        <authorList>
            <person name="Engel S.R."/>
            <person name="Dietrich F.S."/>
            <person name="Fisk D.G."/>
            <person name="Binkley G."/>
            <person name="Balakrishnan R."/>
            <person name="Costanzo M.C."/>
            <person name="Dwight S.S."/>
            <person name="Hitz B.C."/>
            <person name="Karra K."/>
            <person name="Nash R.S."/>
            <person name="Weng S."/>
            <person name="Wong E.D."/>
            <person name="Lloyd P."/>
            <person name="Skrzypek M.S."/>
            <person name="Miyasato S.R."/>
            <person name="Simison M."/>
            <person name="Cherry J.M."/>
        </authorList>
    </citation>
    <scope>GENOME REANNOTATION</scope>
    <source>
        <strain>ATCC 204508 / S288c</strain>
    </source>
</reference>
<reference key="6">
    <citation type="journal article" date="1994" name="J. Biol. Chem.">
        <title>Yeast heat shock transcription factor contains a flexible linker between the DNA-binding and trimerization domains. Implications for DNA binding by trimeric proteins.</title>
        <authorList>
            <person name="Flick K.E."/>
            <person name="Gonzalez L. Jr."/>
            <person name="Harrison C.J."/>
            <person name="Nelson H.C."/>
        </authorList>
    </citation>
    <scope>FUNCTION</scope>
    <scope>SUBUNIT</scope>
    <scope>MUTAGENESIS OF 260-ASN--ASN-280</scope>
</reference>
<reference key="7">
    <citation type="journal article" date="2007" name="J. Proteome Res.">
        <title>Large-scale phosphorylation analysis of alpha-factor-arrested Saccharomyces cerevisiae.</title>
        <authorList>
            <person name="Li X."/>
            <person name="Gerber S.A."/>
            <person name="Rudner A.D."/>
            <person name="Beausoleil S.A."/>
            <person name="Haas W."/>
            <person name="Villen J."/>
            <person name="Elias J.E."/>
            <person name="Gygi S.P."/>
        </authorList>
    </citation>
    <scope>IDENTIFICATION BY MASS SPECTROMETRY [LARGE SCALE ANALYSIS]</scope>
    <source>
        <strain>ADR376</strain>
    </source>
</reference>
<reference key="8">
    <citation type="journal article" date="2008" name="Mol. Cell. Proteomics">
        <title>A multidimensional chromatography technology for in-depth phosphoproteome analysis.</title>
        <authorList>
            <person name="Albuquerque C.P."/>
            <person name="Smolka M.B."/>
            <person name="Payne S.H."/>
            <person name="Bafna V."/>
            <person name="Eng J."/>
            <person name="Zhou H."/>
        </authorList>
    </citation>
    <scope>PHOSPHORYLATION [LARGE SCALE ANALYSIS] AT SER-450 AND SER-458</scope>
    <scope>IDENTIFICATION BY MASS SPECTROMETRY [LARGE SCALE ANALYSIS]</scope>
</reference>
<reference key="9">
    <citation type="journal article" date="2009" name="Science">
        <title>Global analysis of Cdk1 substrate phosphorylation sites provides insights into evolution.</title>
        <authorList>
            <person name="Holt L.J."/>
            <person name="Tuch B.B."/>
            <person name="Villen J."/>
            <person name="Johnson A.D."/>
            <person name="Gygi S.P."/>
            <person name="Morgan D.O."/>
        </authorList>
    </citation>
    <scope>PHOSPHORYLATION [LARGE SCALE ANALYSIS] AT THR-97; SER-458; SER-471; SER-478 AND SER-528</scope>
    <scope>IDENTIFICATION BY MASS SPECTROMETRY [LARGE SCALE ANALYSIS]</scope>
</reference>
<reference key="10">
    <citation type="journal article" date="2012" name="Proc. Natl. Acad. Sci. U.S.A.">
        <title>N-terminal acetylome analyses and functional insights of the N-terminal acetyltransferase NatB.</title>
        <authorList>
            <person name="Van Damme P."/>
            <person name="Lasa M."/>
            <person name="Polevoda B."/>
            <person name="Gazquez C."/>
            <person name="Elosegui-Artola A."/>
            <person name="Kim D.S."/>
            <person name="De Juan-Pardo E."/>
            <person name="Demeyer K."/>
            <person name="Hole K."/>
            <person name="Larrea E."/>
            <person name="Timmerman E."/>
            <person name="Prieto J."/>
            <person name="Arnesen T."/>
            <person name="Sherman F."/>
            <person name="Gevaert K."/>
            <person name="Aldabe R."/>
        </authorList>
    </citation>
    <scope>ACETYLATION [LARGE SCALE ANALYSIS] AT MET-1</scope>
    <scope>IDENTIFICATION BY MASS SPECTROMETRY [LARGE SCALE ANALYSIS]</scope>
</reference>
<dbReference type="EMBL" id="J03139">
    <property type="protein sequence ID" value="AAA34688.1"/>
    <property type="molecule type" value="Genomic_DNA"/>
</dbReference>
<dbReference type="EMBL" id="M22040">
    <property type="protein sequence ID" value="AAA34689.1"/>
    <property type="molecule type" value="Genomic_DNA"/>
</dbReference>
<dbReference type="EMBL" id="Z72596">
    <property type="protein sequence ID" value="CAA96777.1"/>
    <property type="molecule type" value="Genomic_DNA"/>
</dbReference>
<dbReference type="EMBL" id="BK006941">
    <property type="protein sequence ID" value="DAA08031.1"/>
    <property type="molecule type" value="Genomic_DNA"/>
</dbReference>
<dbReference type="PIR" id="A31593">
    <property type="entry name" value="A31593"/>
</dbReference>
<dbReference type="RefSeq" id="NP_011442.3">
    <property type="nucleotide sequence ID" value="NM_001180938.3"/>
</dbReference>
<dbReference type="SMR" id="P10961"/>
<dbReference type="BioGRID" id="33176">
    <property type="interactions" value="423"/>
</dbReference>
<dbReference type="DIP" id="DIP-2374N"/>
<dbReference type="FunCoup" id="P10961">
    <property type="interactions" value="2039"/>
</dbReference>
<dbReference type="IntAct" id="P10961">
    <property type="interactions" value="17"/>
</dbReference>
<dbReference type="MINT" id="P10961"/>
<dbReference type="STRING" id="4932.YGL073W"/>
<dbReference type="GlyGen" id="P10961">
    <property type="glycosylation" value="3 sites, 1 O-linked glycan (3 sites)"/>
</dbReference>
<dbReference type="iPTMnet" id="P10961"/>
<dbReference type="PaxDb" id="4932-YGL073W"/>
<dbReference type="PeptideAtlas" id="P10961"/>
<dbReference type="EnsemblFungi" id="YGL073W_mRNA">
    <property type="protein sequence ID" value="YGL073W"/>
    <property type="gene ID" value="YGL073W"/>
</dbReference>
<dbReference type="GeneID" id="852806"/>
<dbReference type="KEGG" id="sce:YGL073W"/>
<dbReference type="AGR" id="SGD:S000003041"/>
<dbReference type="SGD" id="S000003041">
    <property type="gene designation" value="HSF1"/>
</dbReference>
<dbReference type="VEuPathDB" id="FungiDB:YGL073W"/>
<dbReference type="eggNOG" id="KOG0627">
    <property type="taxonomic scope" value="Eukaryota"/>
</dbReference>
<dbReference type="GeneTree" id="ENSGT00940000169930"/>
<dbReference type="HOGENOM" id="CLU_017670_1_0_1"/>
<dbReference type="InParanoid" id="P10961"/>
<dbReference type="OMA" id="DANHAHI"/>
<dbReference type="OrthoDB" id="60033at2759"/>
<dbReference type="BioCyc" id="YEAST:G3O-30575-MONOMER"/>
<dbReference type="Reactome" id="R-SCE-3371453">
    <property type="pathway name" value="Regulation of HSF1-mediated heat shock response"/>
</dbReference>
<dbReference type="Reactome" id="R-SCE-3371511">
    <property type="pathway name" value="HSF1 activation"/>
</dbReference>
<dbReference type="Reactome" id="R-SCE-3371571">
    <property type="pathway name" value="HSF1-dependent transactivation"/>
</dbReference>
<dbReference type="Reactome" id="R-SCE-9841251">
    <property type="pathway name" value="Mitochondrial unfolded protein response (UPRmt)"/>
</dbReference>
<dbReference type="BioGRID-ORCS" id="852806">
    <property type="hits" value="2 hits in 13 CRISPR screens"/>
</dbReference>
<dbReference type="CD-CODE" id="9F2989DF">
    <property type="entry name" value="Transcriptional condensates"/>
</dbReference>
<dbReference type="CD-CODE" id="BE14A044">
    <property type="entry name" value="Transcriptional condensate"/>
</dbReference>
<dbReference type="CD-CODE" id="D77CF3DC">
    <property type="entry name" value="Nuclear stress body"/>
</dbReference>
<dbReference type="PRO" id="PR:P10961"/>
<dbReference type="Proteomes" id="UP000002311">
    <property type="component" value="Chromosome VII"/>
</dbReference>
<dbReference type="RNAct" id="P10961">
    <property type="molecule type" value="protein"/>
</dbReference>
<dbReference type="GO" id="GO:0005739">
    <property type="term" value="C:mitochondrion"/>
    <property type="evidence" value="ECO:0007005"/>
    <property type="project" value="SGD"/>
</dbReference>
<dbReference type="GO" id="GO:0005634">
    <property type="term" value="C:nucleus"/>
    <property type="evidence" value="ECO:0000314"/>
    <property type="project" value="SGD"/>
</dbReference>
<dbReference type="GO" id="GO:0032993">
    <property type="term" value="C:protein-DNA complex"/>
    <property type="evidence" value="ECO:0000315"/>
    <property type="project" value="CAFA"/>
</dbReference>
<dbReference type="GO" id="GO:0003677">
    <property type="term" value="F:DNA binding"/>
    <property type="evidence" value="ECO:0000315"/>
    <property type="project" value="CAFA"/>
</dbReference>
<dbReference type="GO" id="GO:0003700">
    <property type="term" value="F:DNA-binding transcription factor activity"/>
    <property type="evidence" value="ECO:0000314"/>
    <property type="project" value="SGD"/>
</dbReference>
<dbReference type="GO" id="GO:0043565">
    <property type="term" value="F:sequence-specific DNA binding"/>
    <property type="evidence" value="ECO:0000314"/>
    <property type="project" value="UniProtKB"/>
</dbReference>
<dbReference type="GO" id="GO:0034605">
    <property type="term" value="P:cellular response to heat"/>
    <property type="evidence" value="ECO:0000315"/>
    <property type="project" value="SGD"/>
</dbReference>
<dbReference type="GO" id="GO:1904262">
    <property type="term" value="P:negative regulation of TORC1 signaling"/>
    <property type="evidence" value="ECO:0000315"/>
    <property type="project" value="SGD"/>
</dbReference>
<dbReference type="GO" id="GO:0045944">
    <property type="term" value="P:positive regulation of transcription by RNA polymerase II"/>
    <property type="evidence" value="ECO:0000315"/>
    <property type="project" value="SGD"/>
</dbReference>
<dbReference type="GO" id="GO:0070202">
    <property type="term" value="P:regulation of establishment of protein localization to chromosome"/>
    <property type="evidence" value="ECO:0000315"/>
    <property type="project" value="SGD"/>
</dbReference>
<dbReference type="GO" id="GO:0006357">
    <property type="term" value="P:regulation of transcription by RNA polymerase II"/>
    <property type="evidence" value="ECO:0000314"/>
    <property type="project" value="SGD"/>
</dbReference>
<dbReference type="GO" id="GO:0043555">
    <property type="term" value="P:regulation of translation in response to stress"/>
    <property type="evidence" value="ECO:0000314"/>
    <property type="project" value="SGD"/>
</dbReference>
<dbReference type="GO" id="GO:0009408">
    <property type="term" value="P:response to heat"/>
    <property type="evidence" value="ECO:0000315"/>
    <property type="project" value="SGD"/>
</dbReference>
<dbReference type="DisProt" id="DP00135"/>
<dbReference type="FunFam" id="1.10.10.10:FF:000027">
    <property type="entry name" value="Heat shock transcription factor 1"/>
    <property type="match status" value="1"/>
</dbReference>
<dbReference type="Gene3D" id="1.10.10.10">
    <property type="entry name" value="Winged helix-like DNA-binding domain superfamily/Winged helix DNA-binding domain"/>
    <property type="match status" value="1"/>
</dbReference>
<dbReference type="InterPro" id="IPR000232">
    <property type="entry name" value="HSF_DNA-bd"/>
</dbReference>
<dbReference type="InterPro" id="IPR036388">
    <property type="entry name" value="WH-like_DNA-bd_sf"/>
</dbReference>
<dbReference type="InterPro" id="IPR036390">
    <property type="entry name" value="WH_DNA-bd_sf"/>
</dbReference>
<dbReference type="PANTHER" id="PTHR10015:SF427">
    <property type="entry name" value="HEAT SHOCK FACTOR PROTEIN"/>
    <property type="match status" value="1"/>
</dbReference>
<dbReference type="PANTHER" id="PTHR10015">
    <property type="entry name" value="HEAT SHOCK TRANSCRIPTION FACTOR"/>
    <property type="match status" value="1"/>
</dbReference>
<dbReference type="Pfam" id="PF00447">
    <property type="entry name" value="HSF_DNA-bind"/>
    <property type="match status" value="1"/>
</dbReference>
<dbReference type="PRINTS" id="PR00056">
    <property type="entry name" value="HSFDOMAIN"/>
</dbReference>
<dbReference type="SMART" id="SM00415">
    <property type="entry name" value="HSF"/>
    <property type="match status" value="1"/>
</dbReference>
<dbReference type="SUPFAM" id="SSF46785">
    <property type="entry name" value="Winged helix' DNA-binding domain"/>
    <property type="match status" value="1"/>
</dbReference>
<dbReference type="PROSITE" id="PS00434">
    <property type="entry name" value="HSF_DOMAIN"/>
    <property type="match status" value="1"/>
</dbReference>
<proteinExistence type="evidence at protein level"/>
<comment type="function">
    <text evidence="3 4 5">DNA-binding transcription factor that specifically binds heat shock promoter elements (HSE) and activates transcription.</text>
</comment>
<comment type="subunit">
    <text evidence="5">Homotrimer (PubMed:8175654). Homotrimerization increases the affinity of HSF1 to DNA (PubMed:8175654).</text>
</comment>
<comment type="subcellular location">
    <subcellularLocation>
        <location evidence="8">Nucleus</location>
    </subcellularLocation>
</comment>
<comment type="PTM">
    <text evidence="4">Exhibits temperature-dependent phosphorylation that activates the transcriptional capacity.</text>
</comment>
<comment type="disruption phenotype">
    <text evidence="3 4">Inviable vegetative cell population.</text>
</comment>
<comment type="similarity">
    <text evidence="7">Belongs to the HSF family.</text>
</comment>
<feature type="chain" id="PRO_0000124581" description="Heat shock transcription factor">
    <location>
        <begin position="1"/>
        <end position="833"/>
    </location>
</feature>
<feature type="DNA-binding region" evidence="3 5">
    <location>
        <begin position="170"/>
        <end position="259"/>
    </location>
</feature>
<feature type="region of interest" description="Disordered" evidence="2">
    <location>
        <begin position="1"/>
        <end position="31"/>
    </location>
</feature>
<feature type="region of interest" description="Disordered" evidence="2">
    <location>
        <begin position="62"/>
        <end position="92"/>
    </location>
</feature>
<feature type="region of interest" description="Disordered" evidence="2">
    <location>
        <begin position="150"/>
        <end position="170"/>
    </location>
</feature>
<feature type="region of interest" description="Flexible linker" evidence="5">
    <location>
        <begin position="260"/>
        <end position="280"/>
    </location>
</feature>
<feature type="region of interest" description="Disordered" evidence="2">
    <location>
        <begin position="277"/>
        <end position="309"/>
    </location>
</feature>
<feature type="region of interest" description="Involved in trimerization" evidence="1">
    <location>
        <begin position="350"/>
        <end position="403"/>
    </location>
</feature>
<feature type="region of interest" description="Disordered" evidence="2">
    <location>
        <begin position="447"/>
        <end position="493"/>
    </location>
</feature>
<feature type="region of interest" description="Disordered" evidence="2">
    <location>
        <begin position="542"/>
        <end position="626"/>
    </location>
</feature>
<feature type="region of interest" description="Disordered" evidence="2">
    <location>
        <begin position="657"/>
        <end position="765"/>
    </location>
</feature>
<feature type="region of interest" description="Disordered" evidence="2">
    <location>
        <begin position="778"/>
        <end position="799"/>
    </location>
</feature>
<feature type="compositionally biased region" description="Polar residues" evidence="2">
    <location>
        <begin position="1"/>
        <end position="16"/>
    </location>
</feature>
<feature type="compositionally biased region" description="Low complexity" evidence="2">
    <location>
        <begin position="69"/>
        <end position="80"/>
    </location>
</feature>
<feature type="compositionally biased region" description="Polar residues" evidence="2">
    <location>
        <begin position="150"/>
        <end position="161"/>
    </location>
</feature>
<feature type="compositionally biased region" description="Low complexity" evidence="2">
    <location>
        <begin position="277"/>
        <end position="296"/>
    </location>
</feature>
<feature type="compositionally biased region" description="Basic and acidic residues" evidence="2">
    <location>
        <begin position="447"/>
        <end position="457"/>
    </location>
</feature>
<feature type="compositionally biased region" description="Polar residues" evidence="2">
    <location>
        <begin position="458"/>
        <end position="487"/>
    </location>
</feature>
<feature type="compositionally biased region" description="Polar residues" evidence="2">
    <location>
        <begin position="542"/>
        <end position="554"/>
    </location>
</feature>
<feature type="compositionally biased region" description="Acidic residues" evidence="2">
    <location>
        <begin position="571"/>
        <end position="580"/>
    </location>
</feature>
<feature type="compositionally biased region" description="Polar residues" evidence="2">
    <location>
        <begin position="588"/>
        <end position="600"/>
    </location>
</feature>
<feature type="compositionally biased region" description="Basic and acidic residues" evidence="2">
    <location>
        <begin position="610"/>
        <end position="626"/>
    </location>
</feature>
<feature type="compositionally biased region" description="Low complexity" evidence="2">
    <location>
        <begin position="660"/>
        <end position="675"/>
    </location>
</feature>
<feature type="compositionally biased region" description="Polar residues" evidence="2">
    <location>
        <begin position="676"/>
        <end position="687"/>
    </location>
</feature>
<feature type="compositionally biased region" description="Low complexity" evidence="2">
    <location>
        <begin position="697"/>
        <end position="713"/>
    </location>
</feature>
<feature type="compositionally biased region" description="Polar residues" evidence="2">
    <location>
        <begin position="727"/>
        <end position="739"/>
    </location>
</feature>
<feature type="compositionally biased region" description="Polar residues" evidence="2">
    <location>
        <begin position="752"/>
        <end position="763"/>
    </location>
</feature>
<feature type="compositionally biased region" description="Polar residues" evidence="2">
    <location>
        <begin position="778"/>
        <end position="794"/>
    </location>
</feature>
<feature type="modified residue" description="N-acetylmethionine" evidence="11">
    <location>
        <position position="1"/>
    </location>
</feature>
<feature type="modified residue" description="Phosphothreonine" evidence="10">
    <location>
        <position position="97"/>
    </location>
</feature>
<feature type="modified residue" description="Phosphoserine" evidence="9">
    <location>
        <position position="450"/>
    </location>
</feature>
<feature type="modified residue" description="Phosphoserine" evidence="9 10">
    <location>
        <position position="458"/>
    </location>
</feature>
<feature type="modified residue" description="Phosphoserine" evidence="10">
    <location>
        <position position="471"/>
    </location>
</feature>
<feature type="modified residue" description="Phosphoserine" evidence="10">
    <location>
        <position position="478"/>
    </location>
</feature>
<feature type="modified residue" description="Phosphoserine" evidence="10">
    <location>
        <position position="528"/>
    </location>
</feature>
<feature type="mutagenesis site" description="Inviable vegetative cell population." evidence="5">
    <location>
        <begin position="260"/>
        <end position="332"/>
    </location>
</feature>
<feature type="mutagenesis site" description="Inviable vegetative cell population." evidence="5">
    <location>
        <begin position="260"/>
        <end position="312"/>
    </location>
</feature>
<feature type="mutagenesis site" description="Inviable vegetative cell population." evidence="5">
    <location>
        <begin position="270"/>
        <end position="332"/>
    </location>
</feature>
<feature type="sequence conflict" description="In Ref. 2; AAA34689." evidence="7" ref="2">
    <original>S</original>
    <variation>F</variation>
    <location>
        <position position="522"/>
    </location>
</feature>
<feature type="sequence conflict" description="In Ref. 2; AAA34689." evidence="7" ref="2">
    <original>FDIESNNDRKISEIPFDDEEEEET</original>
    <variation>LISNLIMTAKFQKFLLMTKKKKKP</variation>
    <location>
        <begin position="557"/>
        <end position="580"/>
    </location>
</feature>
<feature type="sequence conflict" description="In Ref. 2; AAA34689." evidence="7" ref="2">
    <original>A</original>
    <variation>V</variation>
    <location>
        <position position="831"/>
    </location>
</feature>